<accession>B2GB14</accession>
<name>CINA_LIMF3</name>
<comment type="similarity">
    <text evidence="1">Belongs to the CinA family.</text>
</comment>
<proteinExistence type="inferred from homology"/>
<feature type="chain" id="PRO_1000100323" description="Putative competence-damage inducible protein">
    <location>
        <begin position="1"/>
        <end position="414"/>
    </location>
</feature>
<gene>
    <name evidence="1" type="primary">cinA</name>
    <name type="ordered locus">LAF_0510</name>
</gene>
<sequence>MQAEIISVGTEIILGQITNTNARYLADQLRQLAIEAPWQTNVDDDPARIKQALATAKERANLIFICGGLGPTEDDRTMAAVGDYLGRQLRLDEDYWQQIKAQLEARSISATVSPENIRQAYYLAGGTPLSNPTGLALGVYLKDGAHTYVVLPGPPHEFKPMVDQSLLPHLKADFGKGYQTYSALLHFVGRPESLLMQELASLGLDERLVVTSYVQPDEIQVRVTLHDVAKEEATSLLEQAIAKIARQEADYYIGRGAGVSMASQLVALLKEKGLKITGAESLTGGLFQATLCSVAGASEVFDGGFVTYAASAKEQLLGVPVETVRQYGVVSKQTAEAMASGCQQKMGVDVGLSFTGVAGPDDLEGHPAGTVWLGLAIKGRPVESHLLRLPGQTRQFVRQQSVQEGMRLAYNALR</sequence>
<reference key="1">
    <citation type="journal article" date="2008" name="DNA Res.">
        <title>Comparative genome analysis of Lactobacillus reuteri and Lactobacillus fermentum reveal a genomic island for reuterin and cobalamin production.</title>
        <authorList>
            <person name="Morita H."/>
            <person name="Toh H."/>
            <person name="Fukuda S."/>
            <person name="Horikawa H."/>
            <person name="Oshima K."/>
            <person name="Suzuki T."/>
            <person name="Murakami M."/>
            <person name="Hisamatsu S."/>
            <person name="Kato Y."/>
            <person name="Takizawa T."/>
            <person name="Fukuoka H."/>
            <person name="Yoshimura T."/>
            <person name="Itoh K."/>
            <person name="O'Sullivan D.J."/>
            <person name="McKay L.L."/>
            <person name="Ohno H."/>
            <person name="Kikuchi J."/>
            <person name="Masaoka T."/>
            <person name="Hattori M."/>
        </authorList>
    </citation>
    <scope>NUCLEOTIDE SEQUENCE [LARGE SCALE GENOMIC DNA]</scope>
    <source>
        <strain>NBRC 3956 / LMG 18251</strain>
    </source>
</reference>
<protein>
    <recommendedName>
        <fullName evidence="1">Putative competence-damage inducible protein</fullName>
    </recommendedName>
</protein>
<evidence type="ECO:0000255" key="1">
    <source>
        <dbReference type="HAMAP-Rule" id="MF_00226"/>
    </source>
</evidence>
<organism>
    <name type="scientific">Limosilactobacillus fermentum (strain NBRC 3956 / LMG 18251)</name>
    <name type="common">Lactobacillus fermentum</name>
    <dbReference type="NCBI Taxonomy" id="334390"/>
    <lineage>
        <taxon>Bacteria</taxon>
        <taxon>Bacillati</taxon>
        <taxon>Bacillota</taxon>
        <taxon>Bacilli</taxon>
        <taxon>Lactobacillales</taxon>
        <taxon>Lactobacillaceae</taxon>
        <taxon>Limosilactobacillus</taxon>
    </lineage>
</organism>
<dbReference type="EMBL" id="AP008937">
    <property type="protein sequence ID" value="BAG26846.1"/>
    <property type="molecule type" value="Genomic_DNA"/>
</dbReference>
<dbReference type="RefSeq" id="WP_012390968.1">
    <property type="nucleotide sequence ID" value="NC_010610.1"/>
</dbReference>
<dbReference type="SMR" id="B2GB14"/>
<dbReference type="KEGG" id="lfe:LAF_0510"/>
<dbReference type="PATRIC" id="fig|334390.5.peg.554"/>
<dbReference type="eggNOG" id="COG1058">
    <property type="taxonomic scope" value="Bacteria"/>
</dbReference>
<dbReference type="eggNOG" id="COG1546">
    <property type="taxonomic scope" value="Bacteria"/>
</dbReference>
<dbReference type="HOGENOM" id="CLU_030805_9_3_9"/>
<dbReference type="Proteomes" id="UP000001697">
    <property type="component" value="Chromosome"/>
</dbReference>
<dbReference type="CDD" id="cd00885">
    <property type="entry name" value="cinA"/>
    <property type="match status" value="1"/>
</dbReference>
<dbReference type="Gene3D" id="3.90.950.20">
    <property type="entry name" value="CinA-like"/>
    <property type="match status" value="1"/>
</dbReference>
<dbReference type="Gene3D" id="3.40.980.10">
    <property type="entry name" value="MoaB/Mog-like domain"/>
    <property type="match status" value="1"/>
</dbReference>
<dbReference type="HAMAP" id="MF_00226_B">
    <property type="entry name" value="CinA_B"/>
    <property type="match status" value="1"/>
</dbReference>
<dbReference type="InterPro" id="IPR050101">
    <property type="entry name" value="CinA"/>
</dbReference>
<dbReference type="InterPro" id="IPR036653">
    <property type="entry name" value="CinA-like_C"/>
</dbReference>
<dbReference type="InterPro" id="IPR008136">
    <property type="entry name" value="CinA_C"/>
</dbReference>
<dbReference type="InterPro" id="IPR041424">
    <property type="entry name" value="CinA_KH"/>
</dbReference>
<dbReference type="InterPro" id="IPR008135">
    <property type="entry name" value="Competence-induced_CinA"/>
</dbReference>
<dbReference type="InterPro" id="IPR036425">
    <property type="entry name" value="MoaB/Mog-like_dom_sf"/>
</dbReference>
<dbReference type="InterPro" id="IPR001453">
    <property type="entry name" value="MoaB/Mog_dom"/>
</dbReference>
<dbReference type="NCBIfam" id="TIGR00200">
    <property type="entry name" value="cinA_nterm"/>
    <property type="match status" value="1"/>
</dbReference>
<dbReference type="NCBIfam" id="TIGR00199">
    <property type="entry name" value="PncC_domain"/>
    <property type="match status" value="1"/>
</dbReference>
<dbReference type="NCBIfam" id="NF001813">
    <property type="entry name" value="PRK00549.1"/>
    <property type="match status" value="1"/>
</dbReference>
<dbReference type="PANTHER" id="PTHR13939">
    <property type="entry name" value="NICOTINAMIDE-NUCLEOTIDE AMIDOHYDROLASE PNCC"/>
    <property type="match status" value="1"/>
</dbReference>
<dbReference type="PANTHER" id="PTHR13939:SF0">
    <property type="entry name" value="NMN AMIDOHYDROLASE-LIKE PROTEIN YFAY"/>
    <property type="match status" value="1"/>
</dbReference>
<dbReference type="Pfam" id="PF02464">
    <property type="entry name" value="CinA"/>
    <property type="match status" value="1"/>
</dbReference>
<dbReference type="Pfam" id="PF18146">
    <property type="entry name" value="CinA_KH"/>
    <property type="match status" value="1"/>
</dbReference>
<dbReference type="Pfam" id="PF00994">
    <property type="entry name" value="MoCF_biosynth"/>
    <property type="match status" value="1"/>
</dbReference>
<dbReference type="PIRSF" id="PIRSF006728">
    <property type="entry name" value="CinA"/>
    <property type="match status" value="1"/>
</dbReference>
<dbReference type="SMART" id="SM00852">
    <property type="entry name" value="MoCF_biosynth"/>
    <property type="match status" value="1"/>
</dbReference>
<dbReference type="SUPFAM" id="SSF142433">
    <property type="entry name" value="CinA-like"/>
    <property type="match status" value="1"/>
</dbReference>
<dbReference type="SUPFAM" id="SSF53218">
    <property type="entry name" value="Molybdenum cofactor biosynthesis proteins"/>
    <property type="match status" value="1"/>
</dbReference>
<keyword id="KW-1185">Reference proteome</keyword>